<keyword id="KW-0067">ATP-binding</keyword>
<keyword id="KW-0143">Chaperone</keyword>
<keyword id="KW-0547">Nucleotide-binding</keyword>
<keyword id="KW-1185">Reference proteome</keyword>
<gene>
    <name evidence="1" type="primary">hscA</name>
    <name type="ordered locus">SO_2268</name>
</gene>
<dbReference type="EMBL" id="AE014299">
    <property type="protein sequence ID" value="AAN55308.1"/>
    <property type="molecule type" value="Genomic_DNA"/>
</dbReference>
<dbReference type="RefSeq" id="NP_717864.1">
    <property type="nucleotide sequence ID" value="NC_004347.2"/>
</dbReference>
<dbReference type="RefSeq" id="WP_011072280.1">
    <property type="nucleotide sequence ID" value="NC_004347.2"/>
</dbReference>
<dbReference type="SMR" id="Q8EEU5"/>
<dbReference type="STRING" id="211586.SO_2268"/>
<dbReference type="PaxDb" id="211586-SO_2268"/>
<dbReference type="KEGG" id="son:SO_2268"/>
<dbReference type="PATRIC" id="fig|211586.12.peg.2184"/>
<dbReference type="eggNOG" id="COG0443">
    <property type="taxonomic scope" value="Bacteria"/>
</dbReference>
<dbReference type="HOGENOM" id="CLU_005965_2_1_6"/>
<dbReference type="OrthoDB" id="9766019at2"/>
<dbReference type="PhylomeDB" id="Q8EEU5"/>
<dbReference type="BioCyc" id="SONE211586:G1GMP-2072-MONOMER"/>
<dbReference type="Proteomes" id="UP000008186">
    <property type="component" value="Chromosome"/>
</dbReference>
<dbReference type="GO" id="GO:0005829">
    <property type="term" value="C:cytosol"/>
    <property type="evidence" value="ECO:0000318"/>
    <property type="project" value="GO_Central"/>
</dbReference>
<dbReference type="GO" id="GO:0005524">
    <property type="term" value="F:ATP binding"/>
    <property type="evidence" value="ECO:0007669"/>
    <property type="project" value="UniProtKB-KW"/>
</dbReference>
<dbReference type="GO" id="GO:0016887">
    <property type="term" value="F:ATP hydrolysis activity"/>
    <property type="evidence" value="ECO:0000318"/>
    <property type="project" value="GO_Central"/>
</dbReference>
<dbReference type="GO" id="GO:0140662">
    <property type="term" value="F:ATP-dependent protein folding chaperone"/>
    <property type="evidence" value="ECO:0007669"/>
    <property type="project" value="InterPro"/>
</dbReference>
<dbReference type="GO" id="GO:0031072">
    <property type="term" value="F:heat shock protein binding"/>
    <property type="evidence" value="ECO:0000318"/>
    <property type="project" value="GO_Central"/>
</dbReference>
<dbReference type="GO" id="GO:0044183">
    <property type="term" value="F:protein folding chaperone"/>
    <property type="evidence" value="ECO:0000318"/>
    <property type="project" value="GO_Central"/>
</dbReference>
<dbReference type="GO" id="GO:0051082">
    <property type="term" value="F:unfolded protein binding"/>
    <property type="evidence" value="ECO:0007669"/>
    <property type="project" value="InterPro"/>
</dbReference>
<dbReference type="GO" id="GO:0051085">
    <property type="term" value="P:chaperone cofactor-dependent protein refolding"/>
    <property type="evidence" value="ECO:0000318"/>
    <property type="project" value="GO_Central"/>
</dbReference>
<dbReference type="GO" id="GO:0016226">
    <property type="term" value="P:iron-sulfur cluster assembly"/>
    <property type="evidence" value="ECO:0007669"/>
    <property type="project" value="InterPro"/>
</dbReference>
<dbReference type="GO" id="GO:0042026">
    <property type="term" value="P:protein refolding"/>
    <property type="evidence" value="ECO:0000318"/>
    <property type="project" value="GO_Central"/>
</dbReference>
<dbReference type="FunFam" id="3.30.420.40:FF:000046">
    <property type="entry name" value="Chaperone protein HscA"/>
    <property type="match status" value="1"/>
</dbReference>
<dbReference type="FunFam" id="2.60.34.10:FF:000005">
    <property type="entry name" value="Chaperone protein HscA homolog"/>
    <property type="match status" value="1"/>
</dbReference>
<dbReference type="Gene3D" id="1.20.1270.10">
    <property type="match status" value="1"/>
</dbReference>
<dbReference type="Gene3D" id="3.30.420.40">
    <property type="match status" value="2"/>
</dbReference>
<dbReference type="Gene3D" id="3.90.640.10">
    <property type="entry name" value="Actin, Chain A, domain 4"/>
    <property type="match status" value="1"/>
</dbReference>
<dbReference type="Gene3D" id="2.60.34.10">
    <property type="entry name" value="Substrate Binding Domain Of DNAk, Chain A, domain 1"/>
    <property type="match status" value="1"/>
</dbReference>
<dbReference type="HAMAP" id="MF_00679">
    <property type="entry name" value="HscA"/>
    <property type="match status" value="1"/>
</dbReference>
<dbReference type="InterPro" id="IPR043129">
    <property type="entry name" value="ATPase_NBD"/>
</dbReference>
<dbReference type="InterPro" id="IPR018181">
    <property type="entry name" value="Heat_shock_70_CS"/>
</dbReference>
<dbReference type="InterPro" id="IPR029048">
    <property type="entry name" value="HSP70_C_sf"/>
</dbReference>
<dbReference type="InterPro" id="IPR029047">
    <property type="entry name" value="HSP70_peptide-bd_sf"/>
</dbReference>
<dbReference type="InterPro" id="IPR013126">
    <property type="entry name" value="Hsp_70_fam"/>
</dbReference>
<dbReference type="InterPro" id="IPR010236">
    <property type="entry name" value="ISC_FeS_clus_asmbl_HscA"/>
</dbReference>
<dbReference type="NCBIfam" id="TIGR01991">
    <property type="entry name" value="HscA"/>
    <property type="match status" value="1"/>
</dbReference>
<dbReference type="NCBIfam" id="NF003520">
    <property type="entry name" value="PRK05183.1"/>
    <property type="match status" value="1"/>
</dbReference>
<dbReference type="PANTHER" id="PTHR19375">
    <property type="entry name" value="HEAT SHOCK PROTEIN 70KDA"/>
    <property type="match status" value="1"/>
</dbReference>
<dbReference type="Pfam" id="PF00012">
    <property type="entry name" value="HSP70"/>
    <property type="match status" value="1"/>
</dbReference>
<dbReference type="PRINTS" id="PR00301">
    <property type="entry name" value="HEATSHOCK70"/>
</dbReference>
<dbReference type="SUPFAM" id="SSF53067">
    <property type="entry name" value="Actin-like ATPase domain"/>
    <property type="match status" value="2"/>
</dbReference>
<dbReference type="SUPFAM" id="SSF100934">
    <property type="entry name" value="Heat shock protein 70kD (HSP70), C-terminal subdomain"/>
    <property type="match status" value="1"/>
</dbReference>
<dbReference type="SUPFAM" id="SSF100920">
    <property type="entry name" value="Heat shock protein 70kD (HSP70), peptide-binding domain"/>
    <property type="match status" value="1"/>
</dbReference>
<dbReference type="PROSITE" id="PS00297">
    <property type="entry name" value="HSP70_1"/>
    <property type="match status" value="1"/>
</dbReference>
<dbReference type="PROSITE" id="PS00329">
    <property type="entry name" value="HSP70_2"/>
    <property type="match status" value="1"/>
</dbReference>
<reference key="1">
    <citation type="journal article" date="2002" name="Nat. Biotechnol.">
        <title>Genome sequence of the dissimilatory metal ion-reducing bacterium Shewanella oneidensis.</title>
        <authorList>
            <person name="Heidelberg J.F."/>
            <person name="Paulsen I.T."/>
            <person name="Nelson K.E."/>
            <person name="Gaidos E.J."/>
            <person name="Nelson W.C."/>
            <person name="Read T.D."/>
            <person name="Eisen J.A."/>
            <person name="Seshadri R."/>
            <person name="Ward N.L."/>
            <person name="Methe B.A."/>
            <person name="Clayton R.A."/>
            <person name="Meyer T."/>
            <person name="Tsapin A."/>
            <person name="Scott J."/>
            <person name="Beanan M.J."/>
            <person name="Brinkac L.M."/>
            <person name="Daugherty S.C."/>
            <person name="DeBoy R.T."/>
            <person name="Dodson R.J."/>
            <person name="Durkin A.S."/>
            <person name="Haft D.H."/>
            <person name="Kolonay J.F."/>
            <person name="Madupu R."/>
            <person name="Peterson J.D."/>
            <person name="Umayam L.A."/>
            <person name="White O."/>
            <person name="Wolf A.M."/>
            <person name="Vamathevan J.J."/>
            <person name="Weidman J.F."/>
            <person name="Impraim M."/>
            <person name="Lee K."/>
            <person name="Berry K.J."/>
            <person name="Lee C."/>
            <person name="Mueller J."/>
            <person name="Khouri H.M."/>
            <person name="Gill J."/>
            <person name="Utterback T.R."/>
            <person name="McDonald L.A."/>
            <person name="Feldblyum T.V."/>
            <person name="Smith H.O."/>
            <person name="Venter J.C."/>
            <person name="Nealson K.H."/>
            <person name="Fraser C.M."/>
        </authorList>
    </citation>
    <scope>NUCLEOTIDE SEQUENCE [LARGE SCALE GENOMIC DNA]</scope>
    <source>
        <strain>ATCC 700550 / JCM 31522 / CIP 106686 / LMG 19005 / NCIMB 14063 / MR-1</strain>
    </source>
</reference>
<accession>Q8EEU5</accession>
<organism>
    <name type="scientific">Shewanella oneidensis (strain ATCC 700550 / JCM 31522 / CIP 106686 / LMG 19005 / NCIMB 14063 / MR-1)</name>
    <dbReference type="NCBI Taxonomy" id="211586"/>
    <lineage>
        <taxon>Bacteria</taxon>
        <taxon>Pseudomonadati</taxon>
        <taxon>Pseudomonadota</taxon>
        <taxon>Gammaproteobacteria</taxon>
        <taxon>Alteromonadales</taxon>
        <taxon>Shewanellaceae</taxon>
        <taxon>Shewanella</taxon>
    </lineage>
</organism>
<comment type="function">
    <text evidence="1">Chaperone involved in the maturation of iron-sulfur cluster-containing proteins. Has a low intrinsic ATPase activity which is markedly stimulated by HscB.</text>
</comment>
<comment type="similarity">
    <text evidence="1">Belongs to the heat shock protein 70 family.</text>
</comment>
<proteinExistence type="inferred from homology"/>
<protein>
    <recommendedName>
        <fullName evidence="1">Chaperone protein HscA homolog</fullName>
    </recommendedName>
</protein>
<feature type="chain" id="PRO_0000078649" description="Chaperone protein HscA homolog">
    <location>
        <begin position="1"/>
        <end position="620"/>
    </location>
</feature>
<evidence type="ECO:0000255" key="1">
    <source>
        <dbReference type="HAMAP-Rule" id="MF_00679"/>
    </source>
</evidence>
<sequence>MALLQIAEPGQSAAPHQHRLAVGIDLGTTNSLVAAVRSGVTATLPDENGQHSLPSIVRYTQEGIEVGYVAAMSSAQDPKNTIVSVKRFMGRSLTDIQSGEQSFPYQFEASENGLPLFVTPQGLVNPVQVSAEILRPLIERAEKTLGGELQGAVITVPAYFDDAQRQGTKDAASLLGVKVLRLLNEPTAAAIAYGLDSKQEGVIAIYDLGGGTFDISILRLNRGVFEVLATGGDSALGGDDFDHLLQAHMLQVWQLTDIDSQLSRQLLIEARRVKEALTYASDTEASLTLADGSVLKQVVTKAQFEGLIAALVKKTIASCRRTLRDAGVTADEVLETVMVGGSTRVPLVREQVEAFFGKAPLTSIDPDRVVAIGAAIQADILVGNKPESELLLLDVIPLSLGIETMGGLVEKVVSRNTTIPVARAQEFTTFKDGQTAMAFHVVQGERELVDDCRSLARFTLKGIPPLAAGAAHIRVTFQVDADGLLSVTAMEKSTGVQSSIQVKPSFGLSDSEIATMLKDSMKHAKEDIGRRMLAEQQVEAARVLESLNAALSKDGDLLTSDERQQIDTVMAELVQVAGSDDADTIKKAIEILDEHTQDFAAKRMDNSIRVAFKGQSIDKI</sequence>
<name>HSCA_SHEON</name>